<gene>
    <name type="ordered locus">slr0245</name>
</gene>
<accession>P72702</accession>
<feature type="chain" id="PRO_0000114748" description="Uncharacterized protein slr0245">
    <location>
        <begin position="1"/>
        <end position="304"/>
    </location>
</feature>
<sequence length="304" mass="33650">MVAIIYSAEFLRHETGPTHPECPARLTAIATALRKMPGANYLHWQKPSPVTWNLDPYILRCHSQEYLNKLAKLAELGGGSLDADTPVSPQSYDVARLAVRAWLDGVDHVLNQREAVFVLARPPGHHAIRNTGMGFCLLNNVAIAAHYALTRPGVERVAILDWDVHHGNGTEALVDHNPRIFYCSLHQFPCYPGTGAAGDRGQHDNVLNIPLKPGGDGKVYREAFEHKVLPFLRQVKPDLLLVSAGYDANHSDPLAYMNLIPEDYGMMTHYLMEISPYPVLGLEGGYHLPSLAKSVVETLKPLLF</sequence>
<dbReference type="EMBL" id="BA000022">
    <property type="protein sequence ID" value="BAA16709.1"/>
    <property type="molecule type" value="Genomic_DNA"/>
</dbReference>
<dbReference type="PIR" id="S74557">
    <property type="entry name" value="S74557"/>
</dbReference>
<dbReference type="SMR" id="P72702"/>
<dbReference type="FunCoup" id="P72702">
    <property type="interactions" value="311"/>
</dbReference>
<dbReference type="IntAct" id="P72702">
    <property type="interactions" value="1"/>
</dbReference>
<dbReference type="STRING" id="1148.gene:10497564"/>
<dbReference type="PaxDb" id="1148-1651782"/>
<dbReference type="EnsemblBacteria" id="BAA16709">
    <property type="protein sequence ID" value="BAA16709"/>
    <property type="gene ID" value="BAA16709"/>
</dbReference>
<dbReference type="KEGG" id="syn:slr0245"/>
<dbReference type="eggNOG" id="COG0123">
    <property type="taxonomic scope" value="Bacteria"/>
</dbReference>
<dbReference type="InParanoid" id="P72702"/>
<dbReference type="PhylomeDB" id="P72702"/>
<dbReference type="Proteomes" id="UP000001425">
    <property type="component" value="Chromosome"/>
</dbReference>
<dbReference type="GO" id="GO:0004407">
    <property type="term" value="F:histone deacetylase activity"/>
    <property type="evidence" value="ECO:0000318"/>
    <property type="project" value="GO_Central"/>
</dbReference>
<dbReference type="GO" id="GO:0016787">
    <property type="term" value="F:hydrolase activity"/>
    <property type="evidence" value="ECO:0007669"/>
    <property type="project" value="UniProtKB-KW"/>
</dbReference>
<dbReference type="GO" id="GO:0040029">
    <property type="term" value="P:epigenetic regulation of gene expression"/>
    <property type="evidence" value="ECO:0000318"/>
    <property type="project" value="GO_Central"/>
</dbReference>
<dbReference type="CDD" id="cd09992">
    <property type="entry name" value="HDAC_classII"/>
    <property type="match status" value="1"/>
</dbReference>
<dbReference type="Gene3D" id="3.40.800.20">
    <property type="entry name" value="Histone deacetylase domain"/>
    <property type="match status" value="1"/>
</dbReference>
<dbReference type="InterPro" id="IPR050284">
    <property type="entry name" value="HDAC_PDAC"/>
</dbReference>
<dbReference type="InterPro" id="IPR000286">
    <property type="entry name" value="His_deacetylse"/>
</dbReference>
<dbReference type="InterPro" id="IPR023801">
    <property type="entry name" value="His_deacetylse_dom"/>
</dbReference>
<dbReference type="InterPro" id="IPR037138">
    <property type="entry name" value="His_deacetylse_dom_sf"/>
</dbReference>
<dbReference type="InterPro" id="IPR023696">
    <property type="entry name" value="Ureohydrolase_dom_sf"/>
</dbReference>
<dbReference type="PANTHER" id="PTHR10625:SF10">
    <property type="entry name" value="HISTONE DEACETYLASE HDAC1"/>
    <property type="match status" value="1"/>
</dbReference>
<dbReference type="PANTHER" id="PTHR10625">
    <property type="entry name" value="HISTONE DEACETYLASE HDAC1-RELATED"/>
    <property type="match status" value="1"/>
</dbReference>
<dbReference type="Pfam" id="PF00850">
    <property type="entry name" value="Hist_deacetyl"/>
    <property type="match status" value="1"/>
</dbReference>
<dbReference type="PRINTS" id="PR01270">
    <property type="entry name" value="HDASUPER"/>
</dbReference>
<dbReference type="SUPFAM" id="SSF52768">
    <property type="entry name" value="Arginase/deacetylase"/>
    <property type="match status" value="1"/>
</dbReference>
<keyword id="KW-0378">Hydrolase</keyword>
<keyword id="KW-1185">Reference proteome</keyword>
<organism>
    <name type="scientific">Synechocystis sp. (strain ATCC 27184 / PCC 6803 / Kazusa)</name>
    <dbReference type="NCBI Taxonomy" id="1111708"/>
    <lineage>
        <taxon>Bacteria</taxon>
        <taxon>Bacillati</taxon>
        <taxon>Cyanobacteriota</taxon>
        <taxon>Cyanophyceae</taxon>
        <taxon>Synechococcales</taxon>
        <taxon>Merismopediaceae</taxon>
        <taxon>Synechocystis</taxon>
    </lineage>
</organism>
<proteinExistence type="inferred from homology"/>
<protein>
    <recommendedName>
        <fullName>Uncharacterized protein slr0245</fullName>
    </recommendedName>
</protein>
<reference key="1">
    <citation type="journal article" date="1996" name="DNA Res.">
        <title>Sequence analysis of the genome of the unicellular cyanobacterium Synechocystis sp. strain PCC6803. II. Sequence determination of the entire genome and assignment of potential protein-coding regions.</title>
        <authorList>
            <person name="Kaneko T."/>
            <person name="Sato S."/>
            <person name="Kotani H."/>
            <person name="Tanaka A."/>
            <person name="Asamizu E."/>
            <person name="Nakamura Y."/>
            <person name="Miyajima N."/>
            <person name="Hirosawa M."/>
            <person name="Sugiura M."/>
            <person name="Sasamoto S."/>
            <person name="Kimura T."/>
            <person name="Hosouchi T."/>
            <person name="Matsuno A."/>
            <person name="Muraki A."/>
            <person name="Nakazaki N."/>
            <person name="Naruo K."/>
            <person name="Okumura S."/>
            <person name="Shimpo S."/>
            <person name="Takeuchi C."/>
            <person name="Wada T."/>
            <person name="Watanabe A."/>
            <person name="Yamada M."/>
            <person name="Yasuda M."/>
            <person name="Tabata S."/>
        </authorList>
    </citation>
    <scope>NUCLEOTIDE SEQUENCE [LARGE SCALE GENOMIC DNA]</scope>
    <source>
        <strain>ATCC 27184 / PCC 6803 / Kazusa</strain>
    </source>
</reference>
<evidence type="ECO:0000250" key="1"/>
<evidence type="ECO:0000305" key="2"/>
<name>Y245_SYNY3</name>
<comment type="function">
    <text evidence="1">Putative deacetylase.</text>
</comment>
<comment type="similarity">
    <text evidence="2">Belongs to the histone deacetylase family.</text>
</comment>